<accession>Q5E769</accession>
<proteinExistence type="inferred from homology"/>
<sequence>MRKVLKKAALCTFGFSMLFGCASEEDTIVMAPVPVVQNQFEPTTEWTSSIGDGVGHYFSRLTPVYAYQKIYVASRDGLVKALDPENGKTIWERDLEQDDTARLSGGLTLTYGKVFIGSENGELITLDAETGEELWREKVDGEVLAKPLADEGYVMVHTSRGALIAFDAETGVEQWQINSEVPNLTLRGDSAPVSISGGVFWGMSNGRLAAALISKGQLLWQQPVGTPKGATEIDRLVDVDASPLILGSRLYTVGYNGQLIALDLRTGQPVWKRNYSSAMNMSSDGKRLFLVTEKDHVVAVDARSGTELWSNEELEYRQLTSPMIIDSYIVLADSEGYLHWLDRDTGLFMSQQEIDSDGIAVSPILVEDSFLVVTREGDIKKMRIK</sequence>
<organism>
    <name type="scientific">Aliivibrio fischeri (strain ATCC 700601 / ES114)</name>
    <name type="common">Vibrio fischeri</name>
    <dbReference type="NCBI Taxonomy" id="312309"/>
    <lineage>
        <taxon>Bacteria</taxon>
        <taxon>Pseudomonadati</taxon>
        <taxon>Pseudomonadota</taxon>
        <taxon>Gammaproteobacteria</taxon>
        <taxon>Vibrionales</taxon>
        <taxon>Vibrionaceae</taxon>
        <taxon>Aliivibrio</taxon>
    </lineage>
</organism>
<comment type="function">
    <text evidence="1">Part of the outer membrane protein assembly complex, which is involved in assembly and insertion of beta-barrel proteins into the outer membrane.</text>
</comment>
<comment type="subunit">
    <text evidence="1">Part of the Bam complex.</text>
</comment>
<comment type="subcellular location">
    <subcellularLocation>
        <location evidence="1">Cell outer membrane</location>
        <topology evidence="1">Lipid-anchor</topology>
    </subcellularLocation>
</comment>
<comment type="similarity">
    <text evidence="1">Belongs to the BamB family.</text>
</comment>
<evidence type="ECO:0000255" key="1">
    <source>
        <dbReference type="HAMAP-Rule" id="MF_00923"/>
    </source>
</evidence>
<dbReference type="EMBL" id="CP000020">
    <property type="protein sequence ID" value="AAW85127.1"/>
    <property type="molecule type" value="Genomic_DNA"/>
</dbReference>
<dbReference type="RefSeq" id="WP_011261368.1">
    <property type="nucleotide sequence ID" value="NC_006840.2"/>
</dbReference>
<dbReference type="RefSeq" id="YP_204015.1">
    <property type="nucleotide sequence ID" value="NC_006840.2"/>
</dbReference>
<dbReference type="SMR" id="Q5E769"/>
<dbReference type="STRING" id="312309.VF_0632"/>
<dbReference type="EnsemblBacteria" id="AAW85127">
    <property type="protein sequence ID" value="AAW85127"/>
    <property type="gene ID" value="VF_0632"/>
</dbReference>
<dbReference type="GeneID" id="54163285"/>
<dbReference type="KEGG" id="vfi:VF_0632"/>
<dbReference type="PATRIC" id="fig|312309.11.peg.624"/>
<dbReference type="eggNOG" id="COG1520">
    <property type="taxonomic scope" value="Bacteria"/>
</dbReference>
<dbReference type="HOGENOM" id="CLU_027480_0_1_6"/>
<dbReference type="OrthoDB" id="5173551at2"/>
<dbReference type="Proteomes" id="UP000000537">
    <property type="component" value="Chromosome I"/>
</dbReference>
<dbReference type="GO" id="GO:0009279">
    <property type="term" value="C:cell outer membrane"/>
    <property type="evidence" value="ECO:0007669"/>
    <property type="project" value="UniProtKB-SubCell"/>
</dbReference>
<dbReference type="GO" id="GO:0043165">
    <property type="term" value="P:Gram-negative-bacterium-type cell outer membrane assembly"/>
    <property type="evidence" value="ECO:0007669"/>
    <property type="project" value="UniProtKB-UniRule"/>
</dbReference>
<dbReference type="GO" id="GO:0051205">
    <property type="term" value="P:protein insertion into membrane"/>
    <property type="evidence" value="ECO:0007669"/>
    <property type="project" value="UniProtKB-UniRule"/>
</dbReference>
<dbReference type="Gene3D" id="2.130.10.10">
    <property type="entry name" value="YVTN repeat-like/Quinoprotein amine dehydrogenase"/>
    <property type="match status" value="1"/>
</dbReference>
<dbReference type="HAMAP" id="MF_00923">
    <property type="entry name" value="OM_assembly_BamB"/>
    <property type="match status" value="1"/>
</dbReference>
<dbReference type="InterPro" id="IPR017687">
    <property type="entry name" value="BamB"/>
</dbReference>
<dbReference type="InterPro" id="IPR018391">
    <property type="entry name" value="PQQ_b-propeller_rpt"/>
</dbReference>
<dbReference type="InterPro" id="IPR002372">
    <property type="entry name" value="PQQ_rpt_dom"/>
</dbReference>
<dbReference type="InterPro" id="IPR011047">
    <property type="entry name" value="Quinoprotein_ADH-like_sf"/>
</dbReference>
<dbReference type="InterPro" id="IPR015943">
    <property type="entry name" value="WD40/YVTN_repeat-like_dom_sf"/>
</dbReference>
<dbReference type="NCBIfam" id="TIGR03300">
    <property type="entry name" value="assembly_YfgL"/>
    <property type="match status" value="1"/>
</dbReference>
<dbReference type="NCBIfam" id="NF008351">
    <property type="entry name" value="PRK11138.1"/>
    <property type="match status" value="1"/>
</dbReference>
<dbReference type="PANTHER" id="PTHR34512">
    <property type="entry name" value="CELL SURFACE PROTEIN"/>
    <property type="match status" value="1"/>
</dbReference>
<dbReference type="PANTHER" id="PTHR34512:SF30">
    <property type="entry name" value="OUTER MEMBRANE PROTEIN ASSEMBLY FACTOR BAMB"/>
    <property type="match status" value="1"/>
</dbReference>
<dbReference type="Pfam" id="PF13360">
    <property type="entry name" value="PQQ_2"/>
    <property type="match status" value="1"/>
</dbReference>
<dbReference type="SMART" id="SM00564">
    <property type="entry name" value="PQQ"/>
    <property type="match status" value="7"/>
</dbReference>
<dbReference type="SUPFAM" id="SSF50998">
    <property type="entry name" value="Quinoprotein alcohol dehydrogenase-like"/>
    <property type="match status" value="1"/>
</dbReference>
<dbReference type="PROSITE" id="PS51257">
    <property type="entry name" value="PROKAR_LIPOPROTEIN"/>
    <property type="match status" value="1"/>
</dbReference>
<reference key="1">
    <citation type="journal article" date="2005" name="Proc. Natl. Acad. Sci. U.S.A.">
        <title>Complete genome sequence of Vibrio fischeri: a symbiotic bacterium with pathogenic congeners.</title>
        <authorList>
            <person name="Ruby E.G."/>
            <person name="Urbanowski M."/>
            <person name="Campbell J."/>
            <person name="Dunn A."/>
            <person name="Faini M."/>
            <person name="Gunsalus R."/>
            <person name="Lostroh P."/>
            <person name="Lupp C."/>
            <person name="McCann J."/>
            <person name="Millikan D."/>
            <person name="Schaefer A."/>
            <person name="Stabb E."/>
            <person name="Stevens A."/>
            <person name="Visick K."/>
            <person name="Whistler C."/>
            <person name="Greenberg E.P."/>
        </authorList>
    </citation>
    <scope>NUCLEOTIDE SEQUENCE [LARGE SCALE GENOMIC DNA]</scope>
    <source>
        <strain>ATCC 700601 / ES114</strain>
    </source>
</reference>
<name>BAMB_ALIF1</name>
<keyword id="KW-0998">Cell outer membrane</keyword>
<keyword id="KW-0449">Lipoprotein</keyword>
<keyword id="KW-0472">Membrane</keyword>
<keyword id="KW-0564">Palmitate</keyword>
<keyword id="KW-1185">Reference proteome</keyword>
<keyword id="KW-0732">Signal</keyword>
<feature type="signal peptide" evidence="1">
    <location>
        <begin position="1"/>
        <end position="20"/>
    </location>
</feature>
<feature type="chain" id="PRO_0000417692" description="Outer membrane protein assembly factor BamB">
    <location>
        <begin position="21"/>
        <end position="385"/>
    </location>
</feature>
<feature type="lipid moiety-binding region" description="N-palmitoyl cysteine" evidence="1">
    <location>
        <position position="21"/>
    </location>
</feature>
<feature type="lipid moiety-binding region" description="S-diacylglycerol cysteine" evidence="1">
    <location>
        <position position="21"/>
    </location>
</feature>
<protein>
    <recommendedName>
        <fullName evidence="1">Outer membrane protein assembly factor BamB</fullName>
    </recommendedName>
</protein>
<gene>
    <name evidence="1" type="primary">bamB</name>
    <name type="ordered locus">VF_0632</name>
</gene>